<gene>
    <name type="primary">ndhG</name>
</gene>
<keyword id="KW-0150">Chloroplast</keyword>
<keyword id="KW-0472">Membrane</keyword>
<keyword id="KW-0520">NAD</keyword>
<keyword id="KW-0521">NADP</keyword>
<keyword id="KW-0934">Plastid</keyword>
<keyword id="KW-0618">Plastoquinone</keyword>
<keyword id="KW-0874">Quinone</keyword>
<keyword id="KW-0793">Thylakoid</keyword>
<keyword id="KW-1278">Translocase</keyword>
<keyword id="KW-0812">Transmembrane</keyword>
<keyword id="KW-1133">Transmembrane helix</keyword>
<keyword id="KW-0813">Transport</keyword>
<accession>A4QLG2</accession>
<protein>
    <recommendedName>
        <fullName>NAD(P)H-quinone oxidoreductase subunit 6, chloroplastic</fullName>
        <ecNumber>7.1.1.-</ecNumber>
    </recommendedName>
    <alternativeName>
        <fullName>NAD(P)H dehydrogenase subunit 6</fullName>
    </alternativeName>
    <alternativeName>
        <fullName>NADH-plastoquinone oxidoreductase subunit 6</fullName>
    </alternativeName>
</protein>
<proteinExistence type="inferred from homology"/>
<dbReference type="EC" id="7.1.1.-"/>
<dbReference type="EMBL" id="AP009374">
    <property type="protein sequence ID" value="BAF50517.1"/>
    <property type="molecule type" value="Genomic_DNA"/>
</dbReference>
<dbReference type="RefSeq" id="YP_001123692.1">
    <property type="nucleotide sequence ID" value="NC_009273.1"/>
</dbReference>
<dbReference type="SMR" id="A4QLG2"/>
<dbReference type="GeneID" id="4961963"/>
<dbReference type="GO" id="GO:0009535">
    <property type="term" value="C:chloroplast thylakoid membrane"/>
    <property type="evidence" value="ECO:0007669"/>
    <property type="project" value="UniProtKB-SubCell"/>
</dbReference>
<dbReference type="GO" id="GO:0008137">
    <property type="term" value="F:NADH dehydrogenase (ubiquinone) activity"/>
    <property type="evidence" value="ECO:0007669"/>
    <property type="project" value="InterPro"/>
</dbReference>
<dbReference type="GO" id="GO:0048038">
    <property type="term" value="F:quinone binding"/>
    <property type="evidence" value="ECO:0007669"/>
    <property type="project" value="UniProtKB-KW"/>
</dbReference>
<dbReference type="FunFam" id="1.20.120.1200:FF:000002">
    <property type="entry name" value="NAD(P)H-quinone oxidoreductase subunit 6, chloroplastic"/>
    <property type="match status" value="1"/>
</dbReference>
<dbReference type="Gene3D" id="1.20.120.1200">
    <property type="entry name" value="NADH-ubiquinone/plastoquinone oxidoreductase chain 6, subunit NuoJ"/>
    <property type="match status" value="1"/>
</dbReference>
<dbReference type="InterPro" id="IPR050290">
    <property type="entry name" value="NAD(P)H-Q_Oxidoreduct_6"/>
</dbReference>
<dbReference type="InterPro" id="IPR001457">
    <property type="entry name" value="NADH_UbQ/plastoQ_OxRdtase_su6"/>
</dbReference>
<dbReference type="InterPro" id="IPR042106">
    <property type="entry name" value="Nuo/plastoQ_OxRdtase_6_NuoJ"/>
</dbReference>
<dbReference type="PANTHER" id="PTHR48479">
    <property type="entry name" value="NAD(P)H-QUINONE OXIDOREDUCTASE SUBUNIT 6, CHLOROPLASTIC"/>
    <property type="match status" value="1"/>
</dbReference>
<dbReference type="PANTHER" id="PTHR48479:SF1">
    <property type="entry name" value="NAD(P)H-QUINONE OXIDOREDUCTASE SUBUNIT 6, CHLOROPLASTIC"/>
    <property type="match status" value="1"/>
</dbReference>
<dbReference type="Pfam" id="PF00499">
    <property type="entry name" value="Oxidored_q3"/>
    <property type="match status" value="1"/>
</dbReference>
<geneLocation type="chloroplast"/>
<sequence length="176" mass="19232">MDLPGPIHDFLLVFLGSGLLVGGLGVVLLPNPIFSAFSLGFVLFCISLLYILSNSHFVAAAQLLIYVGAINVLIIFAVMFMNDSEYSTDFNLWTVGNGITSLVCTTILFSLLSTILDTSWYGVIWTTRLNQILEQDLISNSQQIGIHLSTDFFLPFELISIILLVALIGAISVARQ</sequence>
<comment type="function">
    <text evidence="1">NDH shuttles electrons from NAD(P)H:plastoquinone, via FMN and iron-sulfur (Fe-S) centers, to quinones in the photosynthetic chain and possibly in a chloroplast respiratory chain. The immediate electron acceptor for the enzyme in this species is believed to be plastoquinone. Couples the redox reaction to proton translocation, and thus conserves the redox energy in a proton gradient (By similarity).</text>
</comment>
<comment type="catalytic activity">
    <reaction>
        <text>a plastoquinone + NADH + (n+1) H(+)(in) = a plastoquinol + NAD(+) + n H(+)(out)</text>
        <dbReference type="Rhea" id="RHEA:42608"/>
        <dbReference type="Rhea" id="RHEA-COMP:9561"/>
        <dbReference type="Rhea" id="RHEA-COMP:9562"/>
        <dbReference type="ChEBI" id="CHEBI:15378"/>
        <dbReference type="ChEBI" id="CHEBI:17757"/>
        <dbReference type="ChEBI" id="CHEBI:57540"/>
        <dbReference type="ChEBI" id="CHEBI:57945"/>
        <dbReference type="ChEBI" id="CHEBI:62192"/>
    </reaction>
</comment>
<comment type="catalytic activity">
    <reaction>
        <text>a plastoquinone + NADPH + (n+1) H(+)(in) = a plastoquinol + NADP(+) + n H(+)(out)</text>
        <dbReference type="Rhea" id="RHEA:42612"/>
        <dbReference type="Rhea" id="RHEA-COMP:9561"/>
        <dbReference type="Rhea" id="RHEA-COMP:9562"/>
        <dbReference type="ChEBI" id="CHEBI:15378"/>
        <dbReference type="ChEBI" id="CHEBI:17757"/>
        <dbReference type="ChEBI" id="CHEBI:57783"/>
        <dbReference type="ChEBI" id="CHEBI:58349"/>
        <dbReference type="ChEBI" id="CHEBI:62192"/>
    </reaction>
</comment>
<comment type="subunit">
    <text evidence="1">NDH is composed of at least 16 different subunits, 5 of which are encoded in the nucleus.</text>
</comment>
<comment type="subcellular location">
    <subcellularLocation>
        <location evidence="1">Plastid</location>
        <location evidence="1">Chloroplast thylakoid membrane</location>
        <topology evidence="1">Multi-pass membrane protein</topology>
    </subcellularLocation>
</comment>
<comment type="similarity">
    <text evidence="3">Belongs to the complex I subunit 6 family.</text>
</comment>
<evidence type="ECO:0000250" key="1"/>
<evidence type="ECO:0000255" key="2"/>
<evidence type="ECO:0000305" key="3"/>
<organism>
    <name type="scientific">Lepidium virginicum</name>
    <name type="common">Virginia pepperweed</name>
    <dbReference type="NCBI Taxonomy" id="59292"/>
    <lineage>
        <taxon>Eukaryota</taxon>
        <taxon>Viridiplantae</taxon>
        <taxon>Streptophyta</taxon>
        <taxon>Embryophyta</taxon>
        <taxon>Tracheophyta</taxon>
        <taxon>Spermatophyta</taxon>
        <taxon>Magnoliopsida</taxon>
        <taxon>eudicotyledons</taxon>
        <taxon>Gunneridae</taxon>
        <taxon>Pentapetalae</taxon>
        <taxon>rosids</taxon>
        <taxon>malvids</taxon>
        <taxon>Brassicales</taxon>
        <taxon>Brassicaceae</taxon>
        <taxon>Lepidieae</taxon>
        <taxon>Lepidium</taxon>
    </lineage>
</organism>
<feature type="chain" id="PRO_0000360264" description="NAD(P)H-quinone oxidoreductase subunit 6, chloroplastic">
    <location>
        <begin position="1"/>
        <end position="176"/>
    </location>
</feature>
<feature type="transmembrane region" description="Helical" evidence="2">
    <location>
        <begin position="10"/>
        <end position="30"/>
    </location>
</feature>
<feature type="transmembrane region" description="Helical" evidence="2">
    <location>
        <begin position="32"/>
        <end position="52"/>
    </location>
</feature>
<feature type="transmembrane region" description="Helical" evidence="2">
    <location>
        <begin position="61"/>
        <end position="81"/>
    </location>
</feature>
<feature type="transmembrane region" description="Helical" evidence="2">
    <location>
        <begin position="92"/>
        <end position="112"/>
    </location>
</feature>
<feature type="transmembrane region" description="Helical" evidence="2">
    <location>
        <begin position="152"/>
        <end position="172"/>
    </location>
</feature>
<reference key="1">
    <citation type="submission" date="2007-03" db="EMBL/GenBank/DDBJ databases">
        <title>Sequencing analysis of Lepidium virginicum JO26 chloroplast DNA.</title>
        <authorList>
            <person name="Hosouchi T."/>
            <person name="Tsuruoka H."/>
            <person name="Kotani H."/>
        </authorList>
    </citation>
    <scope>NUCLEOTIDE SEQUENCE [LARGE SCALE GENOMIC DNA]</scope>
</reference>
<name>NU6C_LEPVR</name>